<organism>
    <name type="scientific">Escherichia coli (strain ATCC 8739 / DSM 1576 / NBRC 3972 / NCIMB 8545 / WDCM 00012 / Crooks)</name>
    <dbReference type="NCBI Taxonomy" id="481805"/>
    <lineage>
        <taxon>Bacteria</taxon>
        <taxon>Pseudomonadati</taxon>
        <taxon>Pseudomonadota</taxon>
        <taxon>Gammaproteobacteria</taxon>
        <taxon>Enterobacterales</taxon>
        <taxon>Enterobacteriaceae</taxon>
        <taxon>Escherichia</taxon>
    </lineage>
</organism>
<accession>B1IU48</accession>
<comment type="function">
    <text evidence="1">Interacts with the SecY protein in vivo. May bind preferentially to an uncomplexed state of SecY, thus functioning either as a chelating agent for excess SecY in the cell or as a regulatory factor that negatively controls the translocase function.</text>
</comment>
<comment type="subcellular location">
    <subcellularLocation>
        <location evidence="1">Cell inner membrane</location>
        <topology evidence="1">Peripheral membrane protein</topology>
        <orientation evidence="1">Cytoplasmic side</orientation>
    </subcellularLocation>
    <text evidence="1">Loosely associated with the cytoplasmic side of the inner membrane, probably via SecY.</text>
</comment>
<comment type="similarity">
    <text evidence="1">Belongs to the Syd family.</text>
</comment>
<sequence length="181" mass="20708">MDDLTAQALKDFTARYCDAWHEEHKSWPLSEELYGVPSPCIISTTEDAVYWQPQPFTGEQNVNAVERAFDIVIQPTIHTFYTTQFAGDMHAQFGDIKLTLLQTWSEDDFRRVQENLIGHLVTQKRLKLPPTLFIATLEEELEVISVCNLSGEVCKETLGTRKRTHLASNLAEFLNQLKPLL</sequence>
<name>SYDP_ECOLC</name>
<keyword id="KW-0997">Cell inner membrane</keyword>
<keyword id="KW-1003">Cell membrane</keyword>
<keyword id="KW-0472">Membrane</keyword>
<feature type="chain" id="PRO_1000084801" description="Protein Syd">
    <location>
        <begin position="1"/>
        <end position="181"/>
    </location>
</feature>
<dbReference type="EMBL" id="CP000946">
    <property type="protein sequence ID" value="ACA76588.1"/>
    <property type="molecule type" value="Genomic_DNA"/>
</dbReference>
<dbReference type="RefSeq" id="WP_000342431.1">
    <property type="nucleotide sequence ID" value="NZ_MTFT01000004.1"/>
</dbReference>
<dbReference type="SMR" id="B1IU48"/>
<dbReference type="GeneID" id="93779205"/>
<dbReference type="KEGG" id="ecl:EcolC_0919"/>
<dbReference type="HOGENOM" id="CLU_121866_0_0_6"/>
<dbReference type="GO" id="GO:0009898">
    <property type="term" value="C:cytoplasmic side of plasma membrane"/>
    <property type="evidence" value="ECO:0007669"/>
    <property type="project" value="InterPro"/>
</dbReference>
<dbReference type="CDD" id="cd16323">
    <property type="entry name" value="Syd"/>
    <property type="match status" value="1"/>
</dbReference>
<dbReference type="FunFam" id="3.40.1580.20:FF:000001">
    <property type="entry name" value="Protein Syd"/>
    <property type="match status" value="1"/>
</dbReference>
<dbReference type="Gene3D" id="3.40.1580.20">
    <property type="entry name" value="Syd protein"/>
    <property type="match status" value="1"/>
</dbReference>
<dbReference type="HAMAP" id="MF_01104">
    <property type="entry name" value="Syd"/>
    <property type="match status" value="1"/>
</dbReference>
<dbReference type="InterPro" id="IPR009948">
    <property type="entry name" value="Syd"/>
</dbReference>
<dbReference type="InterPro" id="IPR038228">
    <property type="entry name" value="Syd_sf"/>
</dbReference>
<dbReference type="NCBIfam" id="NF003439">
    <property type="entry name" value="PRK04968.1"/>
    <property type="match status" value="1"/>
</dbReference>
<dbReference type="Pfam" id="PF07348">
    <property type="entry name" value="Syd"/>
    <property type="match status" value="1"/>
</dbReference>
<protein>
    <recommendedName>
        <fullName evidence="1">Protein Syd</fullName>
    </recommendedName>
</protein>
<evidence type="ECO:0000255" key="1">
    <source>
        <dbReference type="HAMAP-Rule" id="MF_01104"/>
    </source>
</evidence>
<proteinExistence type="inferred from homology"/>
<reference key="1">
    <citation type="submission" date="2008-02" db="EMBL/GenBank/DDBJ databases">
        <title>Complete sequence of Escherichia coli C str. ATCC 8739.</title>
        <authorList>
            <person name="Copeland A."/>
            <person name="Lucas S."/>
            <person name="Lapidus A."/>
            <person name="Glavina del Rio T."/>
            <person name="Dalin E."/>
            <person name="Tice H."/>
            <person name="Bruce D."/>
            <person name="Goodwin L."/>
            <person name="Pitluck S."/>
            <person name="Kiss H."/>
            <person name="Brettin T."/>
            <person name="Detter J.C."/>
            <person name="Han C."/>
            <person name="Kuske C.R."/>
            <person name="Schmutz J."/>
            <person name="Larimer F."/>
            <person name="Land M."/>
            <person name="Hauser L."/>
            <person name="Kyrpides N."/>
            <person name="Mikhailova N."/>
            <person name="Ingram L."/>
            <person name="Richardson P."/>
        </authorList>
    </citation>
    <scope>NUCLEOTIDE SEQUENCE [LARGE SCALE GENOMIC DNA]</scope>
    <source>
        <strain>ATCC 8739 / DSM 1576 / NBRC 3972 / NCIMB 8545 / WDCM 00012 / Crooks</strain>
    </source>
</reference>
<gene>
    <name evidence="1" type="primary">syd</name>
    <name type="ordered locus">EcolC_0919</name>
</gene>